<feature type="chain" id="PRO_0000447138" description="Protein EvgL">
    <location>
        <begin position="1"/>
        <end position="9"/>
    </location>
</feature>
<sequence length="9" mass="1029">MLHCKGNNL</sequence>
<dbReference type="EMBL" id="U00096">
    <property type="protein sequence ID" value="QNV50534.1"/>
    <property type="molecule type" value="Genomic_DNA"/>
</dbReference>
<dbReference type="InParanoid" id="P0DSF9"/>
<dbReference type="BioCyc" id="EcoCyc:MONOMER0-4493"/>
<dbReference type="Proteomes" id="UP000000625">
    <property type="component" value="Chromosome"/>
</dbReference>
<proteinExistence type="evidence at protein level"/>
<protein>
    <recommendedName>
        <fullName evidence="2">Protein EvgL</fullName>
    </recommendedName>
</protein>
<name>EVGL_ECOLI</name>
<comment type="induction">
    <text evidence="1">Expressed in both exponential and stationary phase in rich medium; expression is higher in stationary phase (at protein level).</text>
</comment>
<organism>
    <name type="scientific">Escherichia coli (strain K12)</name>
    <dbReference type="NCBI Taxonomy" id="83333"/>
    <lineage>
        <taxon>Bacteria</taxon>
        <taxon>Pseudomonadati</taxon>
        <taxon>Pseudomonadota</taxon>
        <taxon>Gammaproteobacteria</taxon>
        <taxon>Enterobacterales</taxon>
        <taxon>Enterobacteriaceae</taxon>
        <taxon>Escherichia</taxon>
    </lineage>
</organism>
<gene>
    <name evidence="2" type="primary">evgL</name>
    <name evidence="3" type="ordered locus">b4781</name>
</gene>
<reference key="1">
    <citation type="journal article" date="1997" name="Science">
        <title>The complete genome sequence of Escherichia coli K-12.</title>
        <authorList>
            <person name="Blattner F.R."/>
            <person name="Plunkett G. III"/>
            <person name="Bloch C.A."/>
            <person name="Perna N.T."/>
            <person name="Burland V."/>
            <person name="Riley M."/>
            <person name="Collado-Vides J."/>
            <person name="Glasner J.D."/>
            <person name="Rode C.K."/>
            <person name="Mayhew G.F."/>
            <person name="Gregor J."/>
            <person name="Davis N.W."/>
            <person name="Kirkpatrick H.A."/>
            <person name="Goeden M.A."/>
            <person name="Rose D.J."/>
            <person name="Mau B."/>
            <person name="Shao Y."/>
        </authorList>
    </citation>
    <scope>NUCLEOTIDE SEQUENCE [LARGE SCALE GENOMIC DNA]</scope>
    <source>
        <strain>K12 / MG1655 / ATCC 47076</strain>
    </source>
</reference>
<reference key="2">
    <citation type="journal article" date="2019" name="MBio">
        <title>Identifying small proteins by ribosome profiling with stalled initiation complexes.</title>
        <authorList>
            <person name="Weaver J."/>
            <person name="Mohammad F."/>
            <person name="Buskirk A.R."/>
            <person name="Storz G."/>
        </authorList>
    </citation>
    <scope>IDENTIFICATION</scope>
    <scope>INDUCTION</scope>
    <source>
        <strain>K12 / MG1655 / ATCC 47076</strain>
    </source>
</reference>
<keyword id="KW-1185">Reference proteome</keyword>
<accession>P0DSF9</accession>
<accession>A0A7H2C787</accession>
<evidence type="ECO:0000269" key="1">
    <source>
    </source>
</evidence>
<evidence type="ECO:0000303" key="2">
    <source>
    </source>
</evidence>
<evidence type="ECO:0000312" key="3">
    <source>
        <dbReference type="EMBL" id="QNV50534.1"/>
    </source>
</evidence>